<evidence type="ECO:0000255" key="1">
    <source>
        <dbReference type="HAMAP-Rule" id="MF_00818"/>
    </source>
</evidence>
<proteinExistence type="inferred from homology"/>
<accession>A5IIZ4</accession>
<protein>
    <recommendedName>
        <fullName evidence="1">NADPH-dependent 7-cyano-7-deazaguanine reductase</fullName>
        <ecNumber evidence="1">1.7.1.13</ecNumber>
    </recommendedName>
    <alternativeName>
        <fullName evidence="1">7-cyano-7-carbaguanine reductase</fullName>
    </alternativeName>
    <alternativeName>
        <fullName evidence="1">NADPH-dependent nitrile oxidoreductase</fullName>
    </alternativeName>
    <alternativeName>
        <fullName evidence="1">PreQ(0) reductase</fullName>
    </alternativeName>
</protein>
<gene>
    <name evidence="1" type="primary">queF</name>
    <name type="ordered locus">Tpet_0138</name>
</gene>
<organism>
    <name type="scientific">Thermotoga petrophila (strain ATCC BAA-488 / DSM 13995 / JCM 10881 / RKU-1)</name>
    <dbReference type="NCBI Taxonomy" id="390874"/>
    <lineage>
        <taxon>Bacteria</taxon>
        <taxon>Thermotogati</taxon>
        <taxon>Thermotogota</taxon>
        <taxon>Thermotogae</taxon>
        <taxon>Thermotogales</taxon>
        <taxon>Thermotogaceae</taxon>
        <taxon>Thermotoga</taxon>
    </lineage>
</organism>
<name>QUEF_THEP1</name>
<dbReference type="EC" id="1.7.1.13" evidence="1"/>
<dbReference type="EMBL" id="CP000702">
    <property type="protein sequence ID" value="ABQ46167.1"/>
    <property type="molecule type" value="Genomic_DNA"/>
</dbReference>
<dbReference type="RefSeq" id="WP_004080885.1">
    <property type="nucleotide sequence ID" value="NC_009486.1"/>
</dbReference>
<dbReference type="SMR" id="A5IIZ4"/>
<dbReference type="STRING" id="390874.Tpet_0138"/>
<dbReference type="KEGG" id="tpt:Tpet_0138"/>
<dbReference type="eggNOG" id="COG0780">
    <property type="taxonomic scope" value="Bacteria"/>
</dbReference>
<dbReference type="HOGENOM" id="CLU_102489_1_2_0"/>
<dbReference type="UniPathway" id="UPA00392"/>
<dbReference type="Proteomes" id="UP000006558">
    <property type="component" value="Chromosome"/>
</dbReference>
<dbReference type="GO" id="GO:0005737">
    <property type="term" value="C:cytoplasm"/>
    <property type="evidence" value="ECO:0007669"/>
    <property type="project" value="UniProtKB-SubCell"/>
</dbReference>
<dbReference type="GO" id="GO:0033739">
    <property type="term" value="F:preQ1 synthase activity"/>
    <property type="evidence" value="ECO:0007669"/>
    <property type="project" value="UniProtKB-UniRule"/>
</dbReference>
<dbReference type="GO" id="GO:0008616">
    <property type="term" value="P:queuosine biosynthetic process"/>
    <property type="evidence" value="ECO:0007669"/>
    <property type="project" value="UniProtKB-UniRule"/>
</dbReference>
<dbReference type="GO" id="GO:0006400">
    <property type="term" value="P:tRNA modification"/>
    <property type="evidence" value="ECO:0007669"/>
    <property type="project" value="UniProtKB-UniRule"/>
</dbReference>
<dbReference type="Gene3D" id="3.30.1130.10">
    <property type="match status" value="1"/>
</dbReference>
<dbReference type="HAMAP" id="MF_00818">
    <property type="entry name" value="QueF_type1"/>
    <property type="match status" value="1"/>
</dbReference>
<dbReference type="InterPro" id="IPR043133">
    <property type="entry name" value="GTP-CH-I_C/QueF"/>
</dbReference>
<dbReference type="InterPro" id="IPR050084">
    <property type="entry name" value="NADPH_dep_7-cyano-7-deazaG_red"/>
</dbReference>
<dbReference type="InterPro" id="IPR029500">
    <property type="entry name" value="QueF"/>
</dbReference>
<dbReference type="InterPro" id="IPR016856">
    <property type="entry name" value="QueF_type1"/>
</dbReference>
<dbReference type="NCBIfam" id="TIGR03139">
    <property type="entry name" value="QueF-II"/>
    <property type="match status" value="1"/>
</dbReference>
<dbReference type="PANTHER" id="PTHR34354">
    <property type="entry name" value="NADPH-DEPENDENT 7-CYANO-7-DEAZAGUANINE REDUCTASE"/>
    <property type="match status" value="1"/>
</dbReference>
<dbReference type="PANTHER" id="PTHR34354:SF1">
    <property type="entry name" value="NADPH-DEPENDENT 7-CYANO-7-DEAZAGUANINE REDUCTASE"/>
    <property type="match status" value="1"/>
</dbReference>
<dbReference type="Pfam" id="PF14489">
    <property type="entry name" value="QueF"/>
    <property type="match status" value="1"/>
</dbReference>
<dbReference type="PIRSF" id="PIRSF027377">
    <property type="entry name" value="Nitrile_oxidored_QueF"/>
    <property type="match status" value="1"/>
</dbReference>
<dbReference type="SUPFAM" id="SSF55620">
    <property type="entry name" value="Tetrahydrobiopterin biosynthesis enzymes-like"/>
    <property type="match status" value="1"/>
</dbReference>
<feature type="chain" id="PRO_1000062414" description="NADPH-dependent 7-cyano-7-deazaguanine reductase">
    <location>
        <begin position="1"/>
        <end position="137"/>
    </location>
</feature>
<feature type="active site" description="Thioimide intermediate" evidence="1">
    <location>
        <position position="45"/>
    </location>
</feature>
<feature type="active site" description="Proton donor" evidence="1">
    <location>
        <position position="52"/>
    </location>
</feature>
<feature type="binding site" evidence="1">
    <location>
        <begin position="68"/>
        <end position="70"/>
    </location>
    <ligand>
        <name>substrate</name>
    </ligand>
</feature>
<feature type="binding site" evidence="1">
    <location>
        <begin position="87"/>
        <end position="88"/>
    </location>
    <ligand>
        <name>substrate</name>
    </ligand>
</feature>
<sequence>MPKAEGRIFDFKGHDAIRTDFLEAIDFDGKDEYIKIETDEFSAVCPFSGLPDIGRVIIEYYPDGGKIVELKSLKYYFVSFRNVGIYQEEATKRIYEDLKNLLKTDRIRVTVIYNIRGGIKTTTQMGSLEGKKSGEVE</sequence>
<keyword id="KW-0963">Cytoplasm</keyword>
<keyword id="KW-0521">NADP</keyword>
<keyword id="KW-0560">Oxidoreductase</keyword>
<keyword id="KW-0671">Queuosine biosynthesis</keyword>
<comment type="function">
    <text evidence="1">Catalyzes the NADPH-dependent reduction of 7-cyano-7-deazaguanine (preQ0) to 7-aminomethyl-7-deazaguanine (preQ1).</text>
</comment>
<comment type="catalytic activity">
    <reaction evidence="1">
        <text>7-aminomethyl-7-carbaguanine + 2 NADP(+) = 7-cyano-7-deazaguanine + 2 NADPH + 3 H(+)</text>
        <dbReference type="Rhea" id="RHEA:13409"/>
        <dbReference type="ChEBI" id="CHEBI:15378"/>
        <dbReference type="ChEBI" id="CHEBI:45075"/>
        <dbReference type="ChEBI" id="CHEBI:57783"/>
        <dbReference type="ChEBI" id="CHEBI:58349"/>
        <dbReference type="ChEBI" id="CHEBI:58703"/>
        <dbReference type="EC" id="1.7.1.13"/>
    </reaction>
</comment>
<comment type="pathway">
    <text evidence="1">tRNA modification; tRNA-queuosine biosynthesis.</text>
</comment>
<comment type="subcellular location">
    <subcellularLocation>
        <location evidence="1">Cytoplasm</location>
    </subcellularLocation>
</comment>
<comment type="similarity">
    <text evidence="1">Belongs to the GTP cyclohydrolase I family. QueF type 1 subfamily.</text>
</comment>
<reference key="1">
    <citation type="submission" date="2007-05" db="EMBL/GenBank/DDBJ databases">
        <title>Complete sequence of Thermotoga petrophila RKU-1.</title>
        <authorList>
            <consortium name="US DOE Joint Genome Institute"/>
            <person name="Copeland A."/>
            <person name="Lucas S."/>
            <person name="Lapidus A."/>
            <person name="Barry K."/>
            <person name="Glavina del Rio T."/>
            <person name="Dalin E."/>
            <person name="Tice H."/>
            <person name="Pitluck S."/>
            <person name="Sims D."/>
            <person name="Brettin T."/>
            <person name="Bruce D."/>
            <person name="Detter J.C."/>
            <person name="Han C."/>
            <person name="Tapia R."/>
            <person name="Schmutz J."/>
            <person name="Larimer F."/>
            <person name="Land M."/>
            <person name="Hauser L."/>
            <person name="Kyrpides N."/>
            <person name="Mikhailova N."/>
            <person name="Nelson K."/>
            <person name="Gogarten J.P."/>
            <person name="Noll K."/>
            <person name="Richardson P."/>
        </authorList>
    </citation>
    <scope>NUCLEOTIDE SEQUENCE [LARGE SCALE GENOMIC DNA]</scope>
    <source>
        <strain>ATCC BAA-488 / DSM 13995 / JCM 10881 / RKU-1</strain>
    </source>
</reference>